<evidence type="ECO:0000255" key="1">
    <source>
        <dbReference type="HAMAP-Rule" id="MF_01815"/>
    </source>
</evidence>
<proteinExistence type="inferred from homology"/>
<organism>
    <name type="scientific">Burkholderia orbicola (strain AU 1054)</name>
    <dbReference type="NCBI Taxonomy" id="331271"/>
    <lineage>
        <taxon>Bacteria</taxon>
        <taxon>Pseudomonadati</taxon>
        <taxon>Pseudomonadota</taxon>
        <taxon>Betaproteobacteria</taxon>
        <taxon>Burkholderiales</taxon>
        <taxon>Burkholderiaceae</taxon>
        <taxon>Burkholderia</taxon>
        <taxon>Burkholderia cepacia complex</taxon>
        <taxon>Burkholderia orbicola</taxon>
    </lineage>
</organism>
<accession>Q1BXV4</accession>
<gene>
    <name evidence="1" type="primary">fabH</name>
    <name type="ordered locus">Bcen_0641</name>
</gene>
<dbReference type="EC" id="2.3.1.180" evidence="1"/>
<dbReference type="EMBL" id="CP000378">
    <property type="protein sequence ID" value="ABF75551.1"/>
    <property type="molecule type" value="Genomic_DNA"/>
</dbReference>
<dbReference type="SMR" id="Q1BXV4"/>
<dbReference type="HOGENOM" id="CLU_039592_3_1_4"/>
<dbReference type="UniPathway" id="UPA00094"/>
<dbReference type="GO" id="GO:0005737">
    <property type="term" value="C:cytoplasm"/>
    <property type="evidence" value="ECO:0007669"/>
    <property type="project" value="UniProtKB-SubCell"/>
</dbReference>
<dbReference type="GO" id="GO:0004315">
    <property type="term" value="F:3-oxoacyl-[acyl-carrier-protein] synthase activity"/>
    <property type="evidence" value="ECO:0007669"/>
    <property type="project" value="InterPro"/>
</dbReference>
<dbReference type="GO" id="GO:0033818">
    <property type="term" value="F:beta-ketoacyl-acyl-carrier-protein synthase III activity"/>
    <property type="evidence" value="ECO:0007669"/>
    <property type="project" value="UniProtKB-UniRule"/>
</dbReference>
<dbReference type="GO" id="GO:0006633">
    <property type="term" value="P:fatty acid biosynthetic process"/>
    <property type="evidence" value="ECO:0007669"/>
    <property type="project" value="UniProtKB-UniRule"/>
</dbReference>
<dbReference type="GO" id="GO:0044550">
    <property type="term" value="P:secondary metabolite biosynthetic process"/>
    <property type="evidence" value="ECO:0007669"/>
    <property type="project" value="TreeGrafter"/>
</dbReference>
<dbReference type="CDD" id="cd00830">
    <property type="entry name" value="KAS_III"/>
    <property type="match status" value="1"/>
</dbReference>
<dbReference type="FunFam" id="3.40.47.10:FF:000004">
    <property type="entry name" value="3-oxoacyl-[acyl-carrier-protein] synthase 3"/>
    <property type="match status" value="1"/>
</dbReference>
<dbReference type="Gene3D" id="3.40.47.10">
    <property type="match status" value="2"/>
</dbReference>
<dbReference type="HAMAP" id="MF_01815">
    <property type="entry name" value="FabH"/>
    <property type="match status" value="1"/>
</dbReference>
<dbReference type="InterPro" id="IPR013747">
    <property type="entry name" value="ACP_syn_III_C"/>
</dbReference>
<dbReference type="InterPro" id="IPR013751">
    <property type="entry name" value="ACP_syn_III_N"/>
</dbReference>
<dbReference type="InterPro" id="IPR004655">
    <property type="entry name" value="FabH"/>
</dbReference>
<dbReference type="InterPro" id="IPR016039">
    <property type="entry name" value="Thiolase-like"/>
</dbReference>
<dbReference type="NCBIfam" id="TIGR00747">
    <property type="entry name" value="fabH"/>
    <property type="match status" value="1"/>
</dbReference>
<dbReference type="NCBIfam" id="NF006829">
    <property type="entry name" value="PRK09352.1"/>
    <property type="match status" value="1"/>
</dbReference>
<dbReference type="PANTHER" id="PTHR34069">
    <property type="entry name" value="3-OXOACYL-[ACYL-CARRIER-PROTEIN] SYNTHASE 3"/>
    <property type="match status" value="1"/>
</dbReference>
<dbReference type="PANTHER" id="PTHR34069:SF2">
    <property type="entry name" value="BETA-KETOACYL-[ACYL-CARRIER-PROTEIN] SYNTHASE III"/>
    <property type="match status" value="1"/>
</dbReference>
<dbReference type="Pfam" id="PF08545">
    <property type="entry name" value="ACP_syn_III"/>
    <property type="match status" value="1"/>
</dbReference>
<dbReference type="Pfam" id="PF08541">
    <property type="entry name" value="ACP_syn_III_C"/>
    <property type="match status" value="1"/>
</dbReference>
<dbReference type="SUPFAM" id="SSF53901">
    <property type="entry name" value="Thiolase-like"/>
    <property type="match status" value="1"/>
</dbReference>
<name>FABH_BURO1</name>
<sequence length="329" mass="34933">MAQSTLYSRVLGTGSYLPPDRVTNQQLTDRLAKEGIETSDEWIVARTGIHARHFAAPDVTTSDLALEASRRAIEAAGVDPQSIDLIIVATSTPDFVFPSTACLLQNKLGIKNGGAAFDVQAVCSGFAYAMATADSFIRSGQHRTALIVGAETFSRILDFKDRTTCVLFGDGAGAVILSASEEPGVLGSALHADGSYSNILCTPGNVNRGVIDGSVFLHMDGQAVFKLAVNVLEKVAIEALAKANLAPEQIDWLIPHQANIRIMTSTCRKLGLPQERMVVTVDQHGNTSAASIPLALDAAVRDGRIQRGQHVLIEGVGGGFTWGASVFRF</sequence>
<protein>
    <recommendedName>
        <fullName evidence="1">Beta-ketoacyl-[acyl-carrier-protein] synthase III</fullName>
        <shortName evidence="1">Beta-ketoacyl-ACP synthase III</shortName>
        <shortName evidence="1">KAS III</shortName>
        <ecNumber evidence="1">2.3.1.180</ecNumber>
    </recommendedName>
    <alternativeName>
        <fullName evidence="1">3-oxoacyl-[acyl-carrier-protein] synthase 3</fullName>
    </alternativeName>
    <alternativeName>
        <fullName evidence="1">3-oxoacyl-[acyl-carrier-protein] synthase III</fullName>
    </alternativeName>
</protein>
<reference key="1">
    <citation type="submission" date="2006-05" db="EMBL/GenBank/DDBJ databases">
        <title>Complete sequence of chromosome 1 of Burkholderia cenocepacia AU 1054.</title>
        <authorList>
            <consortium name="US DOE Joint Genome Institute"/>
            <person name="Copeland A."/>
            <person name="Lucas S."/>
            <person name="Lapidus A."/>
            <person name="Barry K."/>
            <person name="Detter J.C."/>
            <person name="Glavina del Rio T."/>
            <person name="Hammon N."/>
            <person name="Israni S."/>
            <person name="Dalin E."/>
            <person name="Tice H."/>
            <person name="Pitluck S."/>
            <person name="Chain P."/>
            <person name="Malfatti S."/>
            <person name="Shin M."/>
            <person name="Vergez L."/>
            <person name="Schmutz J."/>
            <person name="Larimer F."/>
            <person name="Land M."/>
            <person name="Hauser L."/>
            <person name="Kyrpides N."/>
            <person name="Lykidis A."/>
            <person name="LiPuma J.J."/>
            <person name="Konstantinidis K."/>
            <person name="Tiedje J.M."/>
            <person name="Richardson P."/>
        </authorList>
    </citation>
    <scope>NUCLEOTIDE SEQUENCE [LARGE SCALE GENOMIC DNA]</scope>
    <source>
        <strain>AU 1054</strain>
    </source>
</reference>
<comment type="function">
    <text evidence="1">Catalyzes the condensation reaction of fatty acid synthesis by the addition to an acyl acceptor of two carbons from malonyl-ACP. Catalyzes the first condensation reaction which initiates fatty acid synthesis and may therefore play a role in governing the total rate of fatty acid production. Possesses both acetoacetyl-ACP synthase and acetyl transacylase activities. Its substrate specificity determines the biosynthesis of branched-chain and/or straight-chain of fatty acids.</text>
</comment>
<comment type="catalytic activity">
    <reaction evidence="1">
        <text>malonyl-[ACP] + acetyl-CoA + H(+) = 3-oxobutanoyl-[ACP] + CO2 + CoA</text>
        <dbReference type="Rhea" id="RHEA:12080"/>
        <dbReference type="Rhea" id="RHEA-COMP:9623"/>
        <dbReference type="Rhea" id="RHEA-COMP:9625"/>
        <dbReference type="ChEBI" id="CHEBI:15378"/>
        <dbReference type="ChEBI" id="CHEBI:16526"/>
        <dbReference type="ChEBI" id="CHEBI:57287"/>
        <dbReference type="ChEBI" id="CHEBI:57288"/>
        <dbReference type="ChEBI" id="CHEBI:78449"/>
        <dbReference type="ChEBI" id="CHEBI:78450"/>
        <dbReference type="EC" id="2.3.1.180"/>
    </reaction>
</comment>
<comment type="pathway">
    <text evidence="1">Lipid metabolism; fatty acid biosynthesis.</text>
</comment>
<comment type="subunit">
    <text evidence="1">Homodimer.</text>
</comment>
<comment type="subcellular location">
    <subcellularLocation>
        <location evidence="1">Cytoplasm</location>
    </subcellularLocation>
</comment>
<comment type="domain">
    <text evidence="1">The last Arg residue of the ACP-binding site is essential for the weak association between ACP/AcpP and FabH.</text>
</comment>
<comment type="similarity">
    <text evidence="1">Belongs to the thiolase-like superfamily. FabH family.</text>
</comment>
<keyword id="KW-0012">Acyltransferase</keyword>
<keyword id="KW-0963">Cytoplasm</keyword>
<keyword id="KW-0275">Fatty acid biosynthesis</keyword>
<keyword id="KW-0276">Fatty acid metabolism</keyword>
<keyword id="KW-0444">Lipid biosynthesis</keyword>
<keyword id="KW-0443">Lipid metabolism</keyword>
<keyword id="KW-0511">Multifunctional enzyme</keyword>
<keyword id="KW-0808">Transferase</keyword>
<feature type="chain" id="PRO_1000070215" description="Beta-ketoacyl-[acyl-carrier-protein] synthase III">
    <location>
        <begin position="1"/>
        <end position="329"/>
    </location>
</feature>
<feature type="region of interest" description="ACP-binding" evidence="1">
    <location>
        <begin position="257"/>
        <end position="261"/>
    </location>
</feature>
<feature type="active site" evidence="1">
    <location>
        <position position="123"/>
    </location>
</feature>
<feature type="active site" evidence="1">
    <location>
        <position position="256"/>
    </location>
</feature>
<feature type="active site" evidence="1">
    <location>
        <position position="286"/>
    </location>
</feature>